<proteinExistence type="inferred from homology"/>
<gene>
    <name evidence="1" type="primary">atpA</name>
    <name type="ordered locus">ERGA_CDS_00740</name>
</gene>
<keyword id="KW-0066">ATP synthesis</keyword>
<keyword id="KW-0067">ATP-binding</keyword>
<keyword id="KW-0997">Cell inner membrane</keyword>
<keyword id="KW-1003">Cell membrane</keyword>
<keyword id="KW-0139">CF(1)</keyword>
<keyword id="KW-0375">Hydrogen ion transport</keyword>
<keyword id="KW-0406">Ion transport</keyword>
<keyword id="KW-0472">Membrane</keyword>
<keyword id="KW-0547">Nucleotide-binding</keyword>
<keyword id="KW-1278">Translocase</keyword>
<keyword id="KW-0813">Transport</keyword>
<accession>Q5FF66</accession>
<evidence type="ECO:0000255" key="1">
    <source>
        <dbReference type="HAMAP-Rule" id="MF_01346"/>
    </source>
</evidence>
<feature type="chain" id="PRO_0000238246" description="ATP synthase subunit alpha">
    <location>
        <begin position="1"/>
        <end position="507"/>
    </location>
</feature>
<feature type="binding site" evidence="1">
    <location>
        <begin position="168"/>
        <end position="175"/>
    </location>
    <ligand>
        <name>ATP</name>
        <dbReference type="ChEBI" id="CHEBI:30616"/>
    </ligand>
</feature>
<feature type="site" description="Required for activity" evidence="1">
    <location>
        <position position="369"/>
    </location>
</feature>
<comment type="function">
    <text evidence="1">Produces ATP from ADP in the presence of a proton gradient across the membrane. The alpha chain is a regulatory subunit.</text>
</comment>
<comment type="catalytic activity">
    <reaction evidence="1">
        <text>ATP + H2O + 4 H(+)(in) = ADP + phosphate + 5 H(+)(out)</text>
        <dbReference type="Rhea" id="RHEA:57720"/>
        <dbReference type="ChEBI" id="CHEBI:15377"/>
        <dbReference type="ChEBI" id="CHEBI:15378"/>
        <dbReference type="ChEBI" id="CHEBI:30616"/>
        <dbReference type="ChEBI" id="CHEBI:43474"/>
        <dbReference type="ChEBI" id="CHEBI:456216"/>
        <dbReference type="EC" id="7.1.2.2"/>
    </reaction>
</comment>
<comment type="subunit">
    <text evidence="1">F-type ATPases have 2 components, CF(1) - the catalytic core - and CF(0) - the membrane proton channel. CF(1) has five subunits: alpha(3), beta(3), gamma(1), delta(1), epsilon(1). CF(0) has three main subunits: a(1), b(2) and c(9-12). The alpha and beta chains form an alternating ring which encloses part of the gamma chain. CF(1) is attached to CF(0) by a central stalk formed by the gamma and epsilon chains, while a peripheral stalk is formed by the delta and b chains.</text>
</comment>
<comment type="subcellular location">
    <subcellularLocation>
        <location evidence="1">Cell inner membrane</location>
        <topology evidence="1">Peripheral membrane protein</topology>
    </subcellularLocation>
</comment>
<comment type="similarity">
    <text evidence="1">Belongs to the ATPase alpha/beta chains family.</text>
</comment>
<protein>
    <recommendedName>
        <fullName evidence="1">ATP synthase subunit alpha</fullName>
        <ecNumber evidence="1">7.1.2.2</ecNumber>
    </recommendedName>
    <alternativeName>
        <fullName evidence="1">ATP synthase F1 sector subunit alpha</fullName>
    </alternativeName>
    <alternativeName>
        <fullName evidence="1">F-ATPase subunit alpha</fullName>
    </alternativeName>
</protein>
<reference key="1">
    <citation type="journal article" date="2006" name="J. Bacteriol.">
        <title>Comparative genomic analysis of three strains of Ehrlichia ruminantium reveals an active process of genome size plasticity.</title>
        <authorList>
            <person name="Frutos R."/>
            <person name="Viari A."/>
            <person name="Ferraz C."/>
            <person name="Morgat A."/>
            <person name="Eychenie S."/>
            <person name="Kandassamy Y."/>
            <person name="Chantal I."/>
            <person name="Bensaid A."/>
            <person name="Coissac E."/>
            <person name="Vachiery N."/>
            <person name="Demaille J."/>
            <person name="Martinez D."/>
        </authorList>
    </citation>
    <scope>NUCLEOTIDE SEQUENCE [LARGE SCALE GENOMIC DNA]</scope>
    <source>
        <strain>Gardel</strain>
    </source>
</reference>
<name>ATPA_EHRRG</name>
<sequence>MISAGEVLKVIKERIENFDGQVKCESVGEVISVKDGIALVYGLEKAKFGEVVAFANGTIGVVLNLDCDTVSIVIFGSENSVGEGDIVKCTNQLMDVPVGLELLGRVVDALGNPIDGLENFDTKTRLPVEIKAPGIIDRQSVTEPLQTGIKVIDMLIPIGRGQRELIIGDRKTGKTAIAIDTIINQKSHNNEVIDKEKVYCIYVAIGQKNSSVARIINKLRESGALEYTIVVVAGASDSASLQYLAPYTACAMGEFFRDNGMHCLIVYDDLSKHAAAYRQMSLLLRRPPGREAYPGDVFFLHSRLLERAAKMSDKKGGGSLTALPIIETQAGDVSAYVPTNVISITDGQIFLESEIFYKGLRPAVNVGLSVSRVGSSAQIKSVKKVAGSIKLSLAQYRELEDFAKFGSDVDVHSQKILDRGRRMMELLKQKQYSPLSVGEQVAVIFAGTSGYLDDISVNDISKFEERLLSELNSNYPDILSSISNNNFTDDIRSLLSKVISKIASSLK</sequence>
<organism>
    <name type="scientific">Ehrlichia ruminantium (strain Gardel)</name>
    <dbReference type="NCBI Taxonomy" id="302409"/>
    <lineage>
        <taxon>Bacteria</taxon>
        <taxon>Pseudomonadati</taxon>
        <taxon>Pseudomonadota</taxon>
        <taxon>Alphaproteobacteria</taxon>
        <taxon>Rickettsiales</taxon>
        <taxon>Anaplasmataceae</taxon>
        <taxon>Ehrlichia</taxon>
    </lineage>
</organism>
<dbReference type="EC" id="7.1.2.2" evidence="1"/>
<dbReference type="EMBL" id="CR925677">
    <property type="protein sequence ID" value="CAI27526.1"/>
    <property type="molecule type" value="Genomic_DNA"/>
</dbReference>
<dbReference type="RefSeq" id="WP_011154765.1">
    <property type="nucleotide sequence ID" value="NC_006831.1"/>
</dbReference>
<dbReference type="SMR" id="Q5FF66"/>
<dbReference type="GeneID" id="33057962"/>
<dbReference type="KEGG" id="erg:ERGA_CDS_00740"/>
<dbReference type="HOGENOM" id="CLU_010091_2_1_5"/>
<dbReference type="OrthoDB" id="9803053at2"/>
<dbReference type="Proteomes" id="UP000000533">
    <property type="component" value="Chromosome"/>
</dbReference>
<dbReference type="GO" id="GO:0005886">
    <property type="term" value="C:plasma membrane"/>
    <property type="evidence" value="ECO:0007669"/>
    <property type="project" value="UniProtKB-SubCell"/>
</dbReference>
<dbReference type="GO" id="GO:0045259">
    <property type="term" value="C:proton-transporting ATP synthase complex"/>
    <property type="evidence" value="ECO:0007669"/>
    <property type="project" value="UniProtKB-KW"/>
</dbReference>
<dbReference type="GO" id="GO:0043531">
    <property type="term" value="F:ADP binding"/>
    <property type="evidence" value="ECO:0007669"/>
    <property type="project" value="TreeGrafter"/>
</dbReference>
<dbReference type="GO" id="GO:0005524">
    <property type="term" value="F:ATP binding"/>
    <property type="evidence" value="ECO:0007669"/>
    <property type="project" value="UniProtKB-UniRule"/>
</dbReference>
<dbReference type="GO" id="GO:0046933">
    <property type="term" value="F:proton-transporting ATP synthase activity, rotational mechanism"/>
    <property type="evidence" value="ECO:0007669"/>
    <property type="project" value="UniProtKB-UniRule"/>
</dbReference>
<dbReference type="CDD" id="cd18113">
    <property type="entry name" value="ATP-synt_F1_alpha_C"/>
    <property type="match status" value="1"/>
</dbReference>
<dbReference type="CDD" id="cd18116">
    <property type="entry name" value="ATP-synt_F1_alpha_N"/>
    <property type="match status" value="1"/>
</dbReference>
<dbReference type="CDD" id="cd01132">
    <property type="entry name" value="F1-ATPase_alpha_CD"/>
    <property type="match status" value="1"/>
</dbReference>
<dbReference type="FunFam" id="1.20.150.20:FF:000001">
    <property type="entry name" value="ATP synthase subunit alpha"/>
    <property type="match status" value="1"/>
</dbReference>
<dbReference type="FunFam" id="3.40.50.300:FF:000002">
    <property type="entry name" value="ATP synthase subunit alpha"/>
    <property type="match status" value="1"/>
</dbReference>
<dbReference type="Gene3D" id="2.40.30.20">
    <property type="match status" value="1"/>
</dbReference>
<dbReference type="Gene3D" id="1.20.150.20">
    <property type="entry name" value="ATP synthase alpha/beta chain, C-terminal domain"/>
    <property type="match status" value="1"/>
</dbReference>
<dbReference type="Gene3D" id="3.40.50.300">
    <property type="entry name" value="P-loop containing nucleotide triphosphate hydrolases"/>
    <property type="match status" value="1"/>
</dbReference>
<dbReference type="HAMAP" id="MF_01346">
    <property type="entry name" value="ATP_synth_alpha_bact"/>
    <property type="match status" value="1"/>
</dbReference>
<dbReference type="InterPro" id="IPR023366">
    <property type="entry name" value="ATP_synth_asu-like_sf"/>
</dbReference>
<dbReference type="InterPro" id="IPR000793">
    <property type="entry name" value="ATP_synth_asu_C"/>
</dbReference>
<dbReference type="InterPro" id="IPR038376">
    <property type="entry name" value="ATP_synth_asu_C_sf"/>
</dbReference>
<dbReference type="InterPro" id="IPR033732">
    <property type="entry name" value="ATP_synth_F1_a_nt-bd_dom"/>
</dbReference>
<dbReference type="InterPro" id="IPR005294">
    <property type="entry name" value="ATP_synth_F1_asu"/>
</dbReference>
<dbReference type="InterPro" id="IPR020003">
    <property type="entry name" value="ATPase_a/bsu_AS"/>
</dbReference>
<dbReference type="InterPro" id="IPR004100">
    <property type="entry name" value="ATPase_F1/V1/A1_a/bsu_N"/>
</dbReference>
<dbReference type="InterPro" id="IPR036121">
    <property type="entry name" value="ATPase_F1/V1/A1_a/bsu_N_sf"/>
</dbReference>
<dbReference type="InterPro" id="IPR000194">
    <property type="entry name" value="ATPase_F1/V1/A1_a/bsu_nucl-bd"/>
</dbReference>
<dbReference type="InterPro" id="IPR027417">
    <property type="entry name" value="P-loop_NTPase"/>
</dbReference>
<dbReference type="NCBIfam" id="TIGR00962">
    <property type="entry name" value="atpA"/>
    <property type="match status" value="1"/>
</dbReference>
<dbReference type="NCBIfam" id="NF009884">
    <property type="entry name" value="PRK13343.1"/>
    <property type="match status" value="1"/>
</dbReference>
<dbReference type="PANTHER" id="PTHR48082">
    <property type="entry name" value="ATP SYNTHASE SUBUNIT ALPHA, MITOCHONDRIAL"/>
    <property type="match status" value="1"/>
</dbReference>
<dbReference type="PANTHER" id="PTHR48082:SF2">
    <property type="entry name" value="ATP SYNTHASE SUBUNIT ALPHA, MITOCHONDRIAL"/>
    <property type="match status" value="1"/>
</dbReference>
<dbReference type="Pfam" id="PF00006">
    <property type="entry name" value="ATP-synt_ab"/>
    <property type="match status" value="1"/>
</dbReference>
<dbReference type="Pfam" id="PF00306">
    <property type="entry name" value="ATP-synt_ab_C"/>
    <property type="match status" value="1"/>
</dbReference>
<dbReference type="Pfam" id="PF02874">
    <property type="entry name" value="ATP-synt_ab_N"/>
    <property type="match status" value="1"/>
</dbReference>
<dbReference type="PIRSF" id="PIRSF039088">
    <property type="entry name" value="F_ATPase_subunit_alpha"/>
    <property type="match status" value="1"/>
</dbReference>
<dbReference type="SUPFAM" id="SSF47917">
    <property type="entry name" value="C-terminal domain of alpha and beta subunits of F1 ATP synthase"/>
    <property type="match status" value="1"/>
</dbReference>
<dbReference type="SUPFAM" id="SSF50615">
    <property type="entry name" value="N-terminal domain of alpha and beta subunits of F1 ATP synthase"/>
    <property type="match status" value="1"/>
</dbReference>
<dbReference type="SUPFAM" id="SSF52540">
    <property type="entry name" value="P-loop containing nucleoside triphosphate hydrolases"/>
    <property type="match status" value="1"/>
</dbReference>
<dbReference type="PROSITE" id="PS00152">
    <property type="entry name" value="ATPASE_ALPHA_BETA"/>
    <property type="match status" value="1"/>
</dbReference>